<accession>Q6CLY1</accession>
<sequence>MLLRLRSKLGIHRVSCEGNDNFGSVIEKWANQLRLNVDPDSVSVSTQPGVSKLMTEIAHQGVESLGLRHGDMVTVEFKVLDTEEKNVSEKEMTNMTVSASTTSVPISSSHNKGSIRGKVKESALDIELEGETGLIPRSRSSLCRHGEKGMCEYCSPLPPWDKGYQDEHSIKHISFHAYLKQLDEVTNKKSSGSSYIPPLSEPNYEINLNCAGGHEPWPKGICSKCQPSAITLQQQSFRMVDHVEFQESELINQFIDSWRTTGMQRFGYLYGYYKRYDNVPLGIKAVVEAIWEPPQHDEQDGLTMDMDQVVKEVEDTDKLAREMGLERIGMIFTDLTDTGLGDGSVYCKRHKDSFFLSSLEVIMAAKHQLRHPNVSKFSETGLFSSRFVTCCISGNLNQEIDIATYQVSIEAEGLVEADLISGSTHPSQAYINETNDKRYVPEIFYTRKNEYNLTVKQNAKPAFPVDYLLVSLTHGFPKETDDDSTTTANTTTVFKTVAGFPWTNRQAMGQSQDYTELKRYVYKACTGNDLAELQAKLSNFHFLLYLHSIEVLNQQEWSLLIRTVTAPTLHEATEPLLNLINSPGWQTFVMILEQSM</sequence>
<gene>
    <name type="primary">NPL4</name>
    <name type="ordered locus">KLLA0E24596g</name>
</gene>
<protein>
    <recommendedName>
        <fullName>Nuclear protein localization protein 4</fullName>
    </recommendedName>
</protein>
<dbReference type="EMBL" id="CR382125">
    <property type="protein sequence ID" value="CAH00145.1"/>
    <property type="molecule type" value="Genomic_DNA"/>
</dbReference>
<dbReference type="RefSeq" id="XP_455058.1">
    <property type="nucleotide sequence ID" value="XM_455058.1"/>
</dbReference>
<dbReference type="SMR" id="Q6CLY1"/>
<dbReference type="FunCoup" id="Q6CLY1">
    <property type="interactions" value="989"/>
</dbReference>
<dbReference type="STRING" id="284590.Q6CLY1"/>
<dbReference type="PaxDb" id="284590-Q6CLY1"/>
<dbReference type="KEGG" id="kla:KLLA0_E24575g"/>
<dbReference type="eggNOG" id="KOG2834">
    <property type="taxonomic scope" value="Eukaryota"/>
</dbReference>
<dbReference type="HOGENOM" id="CLU_017172_0_0_1"/>
<dbReference type="InParanoid" id="Q6CLY1"/>
<dbReference type="OMA" id="TKDRYVP"/>
<dbReference type="Proteomes" id="UP000000598">
    <property type="component" value="Chromosome E"/>
</dbReference>
<dbReference type="GO" id="GO:0005789">
    <property type="term" value="C:endoplasmic reticulum membrane"/>
    <property type="evidence" value="ECO:0007669"/>
    <property type="project" value="UniProtKB-SubCell"/>
</dbReference>
<dbReference type="GO" id="GO:0031965">
    <property type="term" value="C:nuclear membrane"/>
    <property type="evidence" value="ECO:0007669"/>
    <property type="project" value="UniProtKB-SubCell"/>
</dbReference>
<dbReference type="GO" id="GO:0048471">
    <property type="term" value="C:perinuclear region of cytoplasm"/>
    <property type="evidence" value="ECO:0007669"/>
    <property type="project" value="UniProtKB-SubCell"/>
</dbReference>
<dbReference type="GO" id="GO:0043130">
    <property type="term" value="F:ubiquitin binding"/>
    <property type="evidence" value="ECO:0007669"/>
    <property type="project" value="TreeGrafter"/>
</dbReference>
<dbReference type="GO" id="GO:0031625">
    <property type="term" value="F:ubiquitin protein ligase binding"/>
    <property type="evidence" value="ECO:0007669"/>
    <property type="project" value="TreeGrafter"/>
</dbReference>
<dbReference type="GO" id="GO:0051028">
    <property type="term" value="P:mRNA transport"/>
    <property type="evidence" value="ECO:0007669"/>
    <property type="project" value="UniProtKB-KW"/>
</dbReference>
<dbReference type="GO" id="GO:0015031">
    <property type="term" value="P:protein transport"/>
    <property type="evidence" value="ECO:0007669"/>
    <property type="project" value="UniProtKB-KW"/>
</dbReference>
<dbReference type="GO" id="GO:0006511">
    <property type="term" value="P:ubiquitin-dependent protein catabolic process"/>
    <property type="evidence" value="ECO:0007669"/>
    <property type="project" value="InterPro"/>
</dbReference>
<dbReference type="CDD" id="cd08061">
    <property type="entry name" value="MPN_NPL4"/>
    <property type="match status" value="1"/>
</dbReference>
<dbReference type="Gene3D" id="3.10.20.90">
    <property type="entry name" value="Phosphatidylinositol 3-kinase Catalytic Subunit, Chain A, domain 1"/>
    <property type="match status" value="1"/>
</dbReference>
<dbReference type="InterPro" id="IPR037518">
    <property type="entry name" value="MPN"/>
</dbReference>
<dbReference type="InterPro" id="IPR016563">
    <property type="entry name" value="Npl4"/>
</dbReference>
<dbReference type="InterPro" id="IPR007717">
    <property type="entry name" value="NPL4_C"/>
</dbReference>
<dbReference type="InterPro" id="IPR024682">
    <property type="entry name" value="Npl4_Ub-like_dom"/>
</dbReference>
<dbReference type="InterPro" id="IPR007716">
    <property type="entry name" value="NPL4_Zn-bd_put"/>
</dbReference>
<dbReference type="PANTHER" id="PTHR12710">
    <property type="entry name" value="NUCLEAR PROTEIN LOCALIZATION 4"/>
    <property type="match status" value="1"/>
</dbReference>
<dbReference type="PANTHER" id="PTHR12710:SF0">
    <property type="entry name" value="NUCLEAR PROTEIN LOCALIZATION PROTEIN 4 HOMOLOG"/>
    <property type="match status" value="1"/>
</dbReference>
<dbReference type="Pfam" id="PF05021">
    <property type="entry name" value="NPL4"/>
    <property type="match status" value="1"/>
</dbReference>
<dbReference type="Pfam" id="PF11543">
    <property type="entry name" value="UN_NPL4"/>
    <property type="match status" value="1"/>
</dbReference>
<dbReference type="Pfam" id="PF05020">
    <property type="entry name" value="zf-NPL4"/>
    <property type="match status" value="1"/>
</dbReference>
<dbReference type="PIRSF" id="PIRSF010052">
    <property type="entry name" value="Polyub_prc_Npl4"/>
    <property type="match status" value="1"/>
</dbReference>
<dbReference type="PROSITE" id="PS50249">
    <property type="entry name" value="MPN"/>
    <property type="match status" value="1"/>
</dbReference>
<keyword id="KW-0963">Cytoplasm</keyword>
<keyword id="KW-0256">Endoplasmic reticulum</keyword>
<keyword id="KW-0472">Membrane</keyword>
<keyword id="KW-0509">mRNA transport</keyword>
<keyword id="KW-0539">Nucleus</keyword>
<keyword id="KW-0653">Protein transport</keyword>
<keyword id="KW-1185">Reference proteome</keyword>
<keyword id="KW-0811">Translocation</keyword>
<keyword id="KW-0813">Transport</keyword>
<organism>
    <name type="scientific">Kluyveromyces lactis (strain ATCC 8585 / CBS 2359 / DSM 70799 / NBRC 1267 / NRRL Y-1140 / WM37)</name>
    <name type="common">Yeast</name>
    <name type="synonym">Candida sphaerica</name>
    <dbReference type="NCBI Taxonomy" id="284590"/>
    <lineage>
        <taxon>Eukaryota</taxon>
        <taxon>Fungi</taxon>
        <taxon>Dikarya</taxon>
        <taxon>Ascomycota</taxon>
        <taxon>Saccharomycotina</taxon>
        <taxon>Saccharomycetes</taxon>
        <taxon>Saccharomycetales</taxon>
        <taxon>Saccharomycetaceae</taxon>
        <taxon>Kluyveromyces</taxon>
    </lineage>
</organism>
<evidence type="ECO:0000250" key="1"/>
<evidence type="ECO:0000255" key="2">
    <source>
        <dbReference type="PROSITE-ProRule" id="PRU01182"/>
    </source>
</evidence>
<evidence type="ECO:0000256" key="3">
    <source>
        <dbReference type="SAM" id="MobiDB-lite"/>
    </source>
</evidence>
<evidence type="ECO:0000305" key="4"/>
<reference key="1">
    <citation type="journal article" date="2004" name="Nature">
        <title>Genome evolution in yeasts.</title>
        <authorList>
            <person name="Dujon B."/>
            <person name="Sherman D."/>
            <person name="Fischer G."/>
            <person name="Durrens P."/>
            <person name="Casaregola S."/>
            <person name="Lafontaine I."/>
            <person name="de Montigny J."/>
            <person name="Marck C."/>
            <person name="Neuveglise C."/>
            <person name="Talla E."/>
            <person name="Goffard N."/>
            <person name="Frangeul L."/>
            <person name="Aigle M."/>
            <person name="Anthouard V."/>
            <person name="Babour A."/>
            <person name="Barbe V."/>
            <person name="Barnay S."/>
            <person name="Blanchin S."/>
            <person name="Beckerich J.-M."/>
            <person name="Beyne E."/>
            <person name="Bleykasten C."/>
            <person name="Boisrame A."/>
            <person name="Boyer J."/>
            <person name="Cattolico L."/>
            <person name="Confanioleri F."/>
            <person name="de Daruvar A."/>
            <person name="Despons L."/>
            <person name="Fabre E."/>
            <person name="Fairhead C."/>
            <person name="Ferry-Dumazet H."/>
            <person name="Groppi A."/>
            <person name="Hantraye F."/>
            <person name="Hennequin C."/>
            <person name="Jauniaux N."/>
            <person name="Joyet P."/>
            <person name="Kachouri R."/>
            <person name="Kerrest A."/>
            <person name="Koszul R."/>
            <person name="Lemaire M."/>
            <person name="Lesur I."/>
            <person name="Ma L."/>
            <person name="Muller H."/>
            <person name="Nicaud J.-M."/>
            <person name="Nikolski M."/>
            <person name="Oztas S."/>
            <person name="Ozier-Kalogeropoulos O."/>
            <person name="Pellenz S."/>
            <person name="Potier S."/>
            <person name="Richard G.-F."/>
            <person name="Straub M.-L."/>
            <person name="Suleau A."/>
            <person name="Swennen D."/>
            <person name="Tekaia F."/>
            <person name="Wesolowski-Louvel M."/>
            <person name="Westhof E."/>
            <person name="Wirth B."/>
            <person name="Zeniou-Meyer M."/>
            <person name="Zivanovic Y."/>
            <person name="Bolotin-Fukuhara M."/>
            <person name="Thierry A."/>
            <person name="Bouchier C."/>
            <person name="Caudron B."/>
            <person name="Scarpelli C."/>
            <person name="Gaillardin C."/>
            <person name="Weissenbach J."/>
            <person name="Wincker P."/>
            <person name="Souciet J.-L."/>
        </authorList>
    </citation>
    <scope>NUCLEOTIDE SEQUENCE [LARGE SCALE GENOMIC DNA]</scope>
    <source>
        <strain>ATCC 8585 / CBS 2359 / DSM 70799 / NBRC 1267 / NRRL Y-1140 / WM37</strain>
    </source>
</reference>
<proteinExistence type="inferred from homology"/>
<feature type="chain" id="PRO_0000339446" description="Nuclear protein localization protein 4">
    <location>
        <begin position="1"/>
        <end position="596"/>
    </location>
</feature>
<feature type="domain" description="MPN" evidence="2">
    <location>
        <begin position="243"/>
        <end position="383"/>
    </location>
</feature>
<feature type="region of interest" description="Disordered" evidence="3">
    <location>
        <begin position="88"/>
        <end position="115"/>
    </location>
</feature>
<feature type="compositionally biased region" description="Low complexity" evidence="3">
    <location>
        <begin position="96"/>
        <end position="109"/>
    </location>
</feature>
<comment type="function">
    <text evidence="1">Involved in the import of nuclear-targeted proteins into the nucleus and the export of poly(A) RNA out of the nucleus. Has a role in the endoplasmic reticulum-associated degradation (ERAD) pathway (By similarity).</text>
</comment>
<comment type="subcellular location">
    <subcellularLocation>
        <location evidence="1">Cytoplasm</location>
        <location evidence="1">Perinuclear region</location>
    </subcellularLocation>
    <subcellularLocation>
        <location evidence="1">Endoplasmic reticulum membrane</location>
        <topology evidence="1">Peripheral membrane protein</topology>
        <orientation evidence="1">Cytoplasmic side</orientation>
    </subcellularLocation>
    <subcellularLocation>
        <location evidence="1">Nucleus membrane</location>
        <topology evidence="1">Peripheral membrane protein</topology>
        <orientation evidence="1">Cytoplasmic side</orientation>
    </subcellularLocation>
    <text evidence="1">Localizes mainly at the nuclear periphery and the endoplasmic reticulum membrane.</text>
</comment>
<comment type="similarity">
    <text evidence="4">Belongs to the NPL4 family.</text>
</comment>
<name>NPL4_KLULA</name>